<accession>B1LGH4</accession>
<sequence>MSKSRLTVFSFVRRFLLRLMVVLAVFWGGGIALFSVAPVPFSAVMVERQVSAWLHGNFRYVAHSDWVSMDQISPWMGLAVIAAEDQKFPEHWGFDVASIEQALAHNERNENRIRGASTISQQTAKNLFLWDGRSWVRKGLEAGLTLGIETVWSKKRILTVYLNIAEFGDGVFGVEAAAQRYFHKPASKLTRSEAALLAAVLPNPLRFKVSAPSGYVRSRQAWILRQMYQLGGEPFMQQHQLD</sequence>
<keyword id="KW-0997">Cell inner membrane</keyword>
<keyword id="KW-1003">Cell membrane</keyword>
<keyword id="KW-0133">Cell shape</keyword>
<keyword id="KW-0961">Cell wall biogenesis/degradation</keyword>
<keyword id="KW-0328">Glycosyltransferase</keyword>
<keyword id="KW-0472">Membrane</keyword>
<keyword id="KW-0573">Peptidoglycan synthesis</keyword>
<keyword id="KW-0808">Transferase</keyword>
<keyword id="KW-0812">Transmembrane</keyword>
<keyword id="KW-1133">Transmembrane helix</keyword>
<comment type="function">
    <text evidence="1">Peptidoglycan polymerase that catalyzes glycan chain elongation from lipid-linked precursors.</text>
</comment>
<comment type="catalytic activity">
    <reaction evidence="1">
        <text>[GlcNAc-(1-&gt;4)-Mur2Ac(oyl-L-Ala-gamma-D-Glu-L-Lys-D-Ala-D-Ala)](n)-di-trans,octa-cis-undecaprenyl diphosphate + beta-D-GlcNAc-(1-&gt;4)-Mur2Ac(oyl-L-Ala-gamma-D-Glu-L-Lys-D-Ala-D-Ala)-di-trans,octa-cis-undecaprenyl diphosphate = [GlcNAc-(1-&gt;4)-Mur2Ac(oyl-L-Ala-gamma-D-Glu-L-Lys-D-Ala-D-Ala)](n+1)-di-trans,octa-cis-undecaprenyl diphosphate + di-trans,octa-cis-undecaprenyl diphosphate + H(+)</text>
        <dbReference type="Rhea" id="RHEA:23708"/>
        <dbReference type="Rhea" id="RHEA-COMP:9602"/>
        <dbReference type="Rhea" id="RHEA-COMP:9603"/>
        <dbReference type="ChEBI" id="CHEBI:15378"/>
        <dbReference type="ChEBI" id="CHEBI:58405"/>
        <dbReference type="ChEBI" id="CHEBI:60033"/>
        <dbReference type="ChEBI" id="CHEBI:78435"/>
        <dbReference type="EC" id="2.4.99.28"/>
    </reaction>
</comment>
<comment type="pathway">
    <text evidence="1">Cell wall biogenesis; peptidoglycan biosynthesis.</text>
</comment>
<comment type="subcellular location">
    <subcellularLocation>
        <location evidence="1">Cell inner membrane</location>
        <topology evidence="1">Single-pass membrane protein</topology>
    </subcellularLocation>
</comment>
<comment type="similarity">
    <text evidence="1">Belongs to the glycosyltransferase 51 family.</text>
</comment>
<gene>
    <name evidence="1" type="primary">mtgA</name>
    <name type="ordered locus">EcSMS35_3503</name>
</gene>
<organism>
    <name type="scientific">Escherichia coli (strain SMS-3-5 / SECEC)</name>
    <dbReference type="NCBI Taxonomy" id="439855"/>
    <lineage>
        <taxon>Bacteria</taxon>
        <taxon>Pseudomonadati</taxon>
        <taxon>Pseudomonadota</taxon>
        <taxon>Gammaproteobacteria</taxon>
        <taxon>Enterobacterales</taxon>
        <taxon>Enterobacteriaceae</taxon>
        <taxon>Escherichia</taxon>
    </lineage>
</organism>
<proteinExistence type="inferred from homology"/>
<reference key="1">
    <citation type="journal article" date="2008" name="J. Bacteriol.">
        <title>Insights into the environmental resistance gene pool from the genome sequence of the multidrug-resistant environmental isolate Escherichia coli SMS-3-5.</title>
        <authorList>
            <person name="Fricke W.F."/>
            <person name="Wright M.S."/>
            <person name="Lindell A.H."/>
            <person name="Harkins D.M."/>
            <person name="Baker-Austin C."/>
            <person name="Ravel J."/>
            <person name="Stepanauskas R."/>
        </authorList>
    </citation>
    <scope>NUCLEOTIDE SEQUENCE [LARGE SCALE GENOMIC DNA]</scope>
    <source>
        <strain>SMS-3-5 / SECEC</strain>
    </source>
</reference>
<name>MTGA_ECOSM</name>
<protein>
    <recommendedName>
        <fullName evidence="1">Biosynthetic peptidoglycan transglycosylase</fullName>
        <ecNumber evidence="1">2.4.99.28</ecNumber>
    </recommendedName>
    <alternativeName>
        <fullName evidence="1">Glycan polymerase</fullName>
    </alternativeName>
    <alternativeName>
        <fullName evidence="1">Peptidoglycan glycosyltransferase MtgA</fullName>
        <shortName evidence="1">PGT</shortName>
    </alternativeName>
</protein>
<dbReference type="EC" id="2.4.99.28" evidence="1"/>
<dbReference type="EMBL" id="CP000970">
    <property type="protein sequence ID" value="ACB17203.1"/>
    <property type="molecule type" value="Genomic_DNA"/>
</dbReference>
<dbReference type="RefSeq" id="WP_000047096.1">
    <property type="nucleotide sequence ID" value="NC_010498.1"/>
</dbReference>
<dbReference type="SMR" id="B1LGH4"/>
<dbReference type="CAZy" id="GT51">
    <property type="family name" value="Glycosyltransferase Family 51"/>
</dbReference>
<dbReference type="KEGG" id="ecm:EcSMS35_3503"/>
<dbReference type="HOGENOM" id="CLU_006354_1_1_6"/>
<dbReference type="UniPathway" id="UPA00219"/>
<dbReference type="Proteomes" id="UP000007011">
    <property type="component" value="Chromosome"/>
</dbReference>
<dbReference type="GO" id="GO:0009274">
    <property type="term" value="C:peptidoglycan-based cell wall"/>
    <property type="evidence" value="ECO:0007669"/>
    <property type="project" value="InterPro"/>
</dbReference>
<dbReference type="GO" id="GO:0005886">
    <property type="term" value="C:plasma membrane"/>
    <property type="evidence" value="ECO:0007669"/>
    <property type="project" value="UniProtKB-SubCell"/>
</dbReference>
<dbReference type="GO" id="GO:0016763">
    <property type="term" value="F:pentosyltransferase activity"/>
    <property type="evidence" value="ECO:0007669"/>
    <property type="project" value="InterPro"/>
</dbReference>
<dbReference type="GO" id="GO:0008955">
    <property type="term" value="F:peptidoglycan glycosyltransferase activity"/>
    <property type="evidence" value="ECO:0007669"/>
    <property type="project" value="UniProtKB-UniRule"/>
</dbReference>
<dbReference type="GO" id="GO:0071555">
    <property type="term" value="P:cell wall organization"/>
    <property type="evidence" value="ECO:0007669"/>
    <property type="project" value="UniProtKB-KW"/>
</dbReference>
<dbReference type="GO" id="GO:0009252">
    <property type="term" value="P:peptidoglycan biosynthetic process"/>
    <property type="evidence" value="ECO:0007669"/>
    <property type="project" value="UniProtKB-UniRule"/>
</dbReference>
<dbReference type="GO" id="GO:0008360">
    <property type="term" value="P:regulation of cell shape"/>
    <property type="evidence" value="ECO:0007669"/>
    <property type="project" value="UniProtKB-KW"/>
</dbReference>
<dbReference type="FunFam" id="1.10.3810.10:FF:000004">
    <property type="entry name" value="Biosynthetic peptidoglycan transglycosylase"/>
    <property type="match status" value="1"/>
</dbReference>
<dbReference type="Gene3D" id="1.10.3810.10">
    <property type="entry name" value="Biosynthetic peptidoglycan transglycosylase-like"/>
    <property type="match status" value="1"/>
</dbReference>
<dbReference type="HAMAP" id="MF_00766">
    <property type="entry name" value="PGT_MtgA"/>
    <property type="match status" value="1"/>
</dbReference>
<dbReference type="InterPro" id="IPR001264">
    <property type="entry name" value="Glyco_trans_51"/>
</dbReference>
<dbReference type="InterPro" id="IPR023346">
    <property type="entry name" value="Lysozyme-like_dom_sf"/>
</dbReference>
<dbReference type="InterPro" id="IPR036950">
    <property type="entry name" value="PBP_transglycosylase"/>
</dbReference>
<dbReference type="InterPro" id="IPR011812">
    <property type="entry name" value="Pep_trsgly"/>
</dbReference>
<dbReference type="NCBIfam" id="TIGR02070">
    <property type="entry name" value="mono_pep_trsgly"/>
    <property type="match status" value="1"/>
</dbReference>
<dbReference type="PANTHER" id="PTHR30400:SF0">
    <property type="entry name" value="BIOSYNTHETIC PEPTIDOGLYCAN TRANSGLYCOSYLASE"/>
    <property type="match status" value="1"/>
</dbReference>
<dbReference type="PANTHER" id="PTHR30400">
    <property type="entry name" value="MONOFUNCTIONAL BIOSYNTHETIC PEPTIDOGLYCAN TRANSGLYCOSYLASE"/>
    <property type="match status" value="1"/>
</dbReference>
<dbReference type="Pfam" id="PF00912">
    <property type="entry name" value="Transgly"/>
    <property type="match status" value="1"/>
</dbReference>
<dbReference type="SUPFAM" id="SSF53955">
    <property type="entry name" value="Lysozyme-like"/>
    <property type="match status" value="1"/>
</dbReference>
<feature type="chain" id="PRO_1000133597" description="Biosynthetic peptidoglycan transglycosylase">
    <location>
        <begin position="1"/>
        <end position="242"/>
    </location>
</feature>
<feature type="transmembrane region" description="Helical" evidence="1">
    <location>
        <begin position="19"/>
        <end position="39"/>
    </location>
</feature>
<evidence type="ECO:0000255" key="1">
    <source>
        <dbReference type="HAMAP-Rule" id="MF_00766"/>
    </source>
</evidence>